<comment type="function">
    <text evidence="1">Participates in both the initiation and recycling phases of transcription. In the presence of the delta subunit, RNAP displays an increased specificity of transcription, a decreased affinity for nucleic acids, and an increased efficiency of RNA synthesis because of enhanced recycling.</text>
</comment>
<comment type="subunit">
    <text evidence="1">RNAP is composed of a core of 2 alpha, a beta and a beta' subunits. The core is associated with a delta subunit and one of several sigma factors.</text>
</comment>
<comment type="similarity">
    <text evidence="1">Belongs to the RpoE family.</text>
</comment>
<feature type="chain" id="PRO_1000120569" description="Probable DNA-directed RNA polymerase subunit delta">
    <location>
        <begin position="1"/>
        <end position="200"/>
    </location>
</feature>
<feature type="domain" description="HTH HARE-type" evidence="2">
    <location>
        <begin position="19"/>
        <end position="88"/>
    </location>
</feature>
<feature type="region of interest" description="Disordered" evidence="3">
    <location>
        <begin position="125"/>
        <end position="200"/>
    </location>
</feature>
<feature type="compositionally biased region" description="Acidic residues" evidence="3">
    <location>
        <begin position="125"/>
        <end position="143"/>
    </location>
</feature>
<feature type="compositionally biased region" description="Acidic residues" evidence="3">
    <location>
        <begin position="150"/>
        <end position="200"/>
    </location>
</feature>
<gene>
    <name evidence="1" type="primary">rpoE</name>
    <name type="ordered locus">SPCG_0472</name>
</gene>
<sequence>MRRNALELEVFAGQEKSELSMIEVARAILELRGRDHEMHFSDLVNEIQNYLGTSNSDIREALPLFYTELNFDGSFISLGDNKWGLRSWYGVDEIDEEIIALEENDDDEVAPKAKKKRVNAFMDGDSDAIDYNADDPEDEDAYEADPALSYDDENPDDEKNEVEAYDAEINEIAPDDLGEDVDLNEDDDEFSDDDAETSEE</sequence>
<proteinExistence type="inferred from homology"/>
<protein>
    <recommendedName>
        <fullName evidence="1">Probable DNA-directed RNA polymerase subunit delta</fullName>
    </recommendedName>
    <alternativeName>
        <fullName evidence="1">RNAP delta factor</fullName>
    </alternativeName>
</protein>
<reference key="1">
    <citation type="journal article" date="2009" name="BMC Genomics">
        <title>Genome evolution driven by host adaptations results in a more virulent and antimicrobial-resistant Streptococcus pneumoniae serotype 14.</title>
        <authorList>
            <person name="Ding F."/>
            <person name="Tang P."/>
            <person name="Hsu M.-H."/>
            <person name="Cui P."/>
            <person name="Hu S."/>
            <person name="Yu J."/>
            <person name="Chiu C.-H."/>
        </authorList>
    </citation>
    <scope>NUCLEOTIDE SEQUENCE [LARGE SCALE GENOMIC DNA]</scope>
    <source>
        <strain>CGSP14</strain>
    </source>
</reference>
<accession>B2IM97</accession>
<organism>
    <name type="scientific">Streptococcus pneumoniae (strain CGSP14)</name>
    <dbReference type="NCBI Taxonomy" id="516950"/>
    <lineage>
        <taxon>Bacteria</taxon>
        <taxon>Bacillati</taxon>
        <taxon>Bacillota</taxon>
        <taxon>Bacilli</taxon>
        <taxon>Lactobacillales</taxon>
        <taxon>Streptococcaceae</taxon>
        <taxon>Streptococcus</taxon>
    </lineage>
</organism>
<keyword id="KW-0240">DNA-directed RNA polymerase</keyword>
<keyword id="KW-0548">Nucleotidyltransferase</keyword>
<keyword id="KW-0804">Transcription</keyword>
<keyword id="KW-0808">Transferase</keyword>
<name>RPOE_STRPS</name>
<evidence type="ECO:0000255" key="1">
    <source>
        <dbReference type="HAMAP-Rule" id="MF_00357"/>
    </source>
</evidence>
<evidence type="ECO:0000255" key="2">
    <source>
        <dbReference type="PROSITE-ProRule" id="PRU01261"/>
    </source>
</evidence>
<evidence type="ECO:0000256" key="3">
    <source>
        <dbReference type="SAM" id="MobiDB-lite"/>
    </source>
</evidence>
<dbReference type="EMBL" id="CP001033">
    <property type="protein sequence ID" value="ACB89724.1"/>
    <property type="molecule type" value="Genomic_DNA"/>
</dbReference>
<dbReference type="SMR" id="B2IM97"/>
<dbReference type="KEGG" id="spw:SPCG_0472"/>
<dbReference type="HOGENOM" id="CLU_116648_0_0_9"/>
<dbReference type="GO" id="GO:0000428">
    <property type="term" value="C:DNA-directed RNA polymerase complex"/>
    <property type="evidence" value="ECO:0007669"/>
    <property type="project" value="UniProtKB-KW"/>
</dbReference>
<dbReference type="GO" id="GO:0003899">
    <property type="term" value="F:DNA-directed RNA polymerase activity"/>
    <property type="evidence" value="ECO:0007669"/>
    <property type="project" value="UniProtKB-UniRule"/>
</dbReference>
<dbReference type="GO" id="GO:0006351">
    <property type="term" value="P:DNA-templated transcription"/>
    <property type="evidence" value="ECO:0007669"/>
    <property type="project" value="InterPro"/>
</dbReference>
<dbReference type="GO" id="GO:0006355">
    <property type="term" value="P:regulation of DNA-templated transcription"/>
    <property type="evidence" value="ECO:0007669"/>
    <property type="project" value="UniProtKB-UniRule"/>
</dbReference>
<dbReference type="Gene3D" id="1.10.10.1250">
    <property type="entry name" value="RNA polymerase, subunit delta, N-terminal domain"/>
    <property type="match status" value="1"/>
</dbReference>
<dbReference type="HAMAP" id="MF_00357">
    <property type="entry name" value="RNApol_bact_RpoE"/>
    <property type="match status" value="1"/>
</dbReference>
<dbReference type="InterPro" id="IPR007759">
    <property type="entry name" value="Asxl_HARE-HTH"/>
</dbReference>
<dbReference type="InterPro" id="IPR038087">
    <property type="entry name" value="RNAP_delta_N_dom_sf"/>
</dbReference>
<dbReference type="InterPro" id="IPR029757">
    <property type="entry name" value="RpoE"/>
</dbReference>
<dbReference type="NCBIfam" id="TIGR04567">
    <property type="entry name" value="RNAP_delt_lowGC"/>
    <property type="match status" value="1"/>
</dbReference>
<dbReference type="Pfam" id="PF05066">
    <property type="entry name" value="HARE-HTH"/>
    <property type="match status" value="1"/>
</dbReference>
<dbReference type="PROSITE" id="PS51913">
    <property type="entry name" value="HTH_HARE"/>
    <property type="match status" value="1"/>
</dbReference>